<gene>
    <name evidence="1" type="primary">allA</name>
    <name type="ordered locus">Atu2324</name>
    <name type="ORF">AGR_C_4225</name>
</gene>
<dbReference type="EC" id="4.3.2.3" evidence="1"/>
<dbReference type="EMBL" id="AE007869">
    <property type="protein sequence ID" value="AAK88067.1"/>
    <property type="molecule type" value="Genomic_DNA"/>
</dbReference>
<dbReference type="PIR" id="AC2862">
    <property type="entry name" value="AC2862"/>
</dbReference>
<dbReference type="PIR" id="B97639">
    <property type="entry name" value="B97639"/>
</dbReference>
<dbReference type="RefSeq" id="NP_355282.1">
    <property type="nucleotide sequence ID" value="NC_003062.2"/>
</dbReference>
<dbReference type="RefSeq" id="WP_010972231.1">
    <property type="nucleotide sequence ID" value="NC_003062.2"/>
</dbReference>
<dbReference type="SMR" id="Q8UD04"/>
<dbReference type="STRING" id="176299.Atu2324"/>
<dbReference type="EnsemblBacteria" id="AAK88067">
    <property type="protein sequence ID" value="AAK88067"/>
    <property type="gene ID" value="Atu2324"/>
</dbReference>
<dbReference type="GeneID" id="1134362"/>
<dbReference type="KEGG" id="atu:Atu2324"/>
<dbReference type="PATRIC" id="fig|176299.10.peg.2338"/>
<dbReference type="eggNOG" id="COG3194">
    <property type="taxonomic scope" value="Bacteria"/>
</dbReference>
<dbReference type="HOGENOM" id="CLU_070848_1_0_5"/>
<dbReference type="OrthoDB" id="9804602at2"/>
<dbReference type="PhylomeDB" id="Q8UD04"/>
<dbReference type="BioCyc" id="AGRO:ATU2324-MONOMER"/>
<dbReference type="UniPathway" id="UPA00395"/>
<dbReference type="Proteomes" id="UP000000813">
    <property type="component" value="Chromosome circular"/>
</dbReference>
<dbReference type="GO" id="GO:0004848">
    <property type="term" value="F:ureidoglycolate hydrolase activity"/>
    <property type="evidence" value="ECO:0007669"/>
    <property type="project" value="InterPro"/>
</dbReference>
<dbReference type="GO" id="GO:0050385">
    <property type="term" value="F:ureidoglycolate lyase activity"/>
    <property type="evidence" value="ECO:0007669"/>
    <property type="project" value="UniProtKB-UniRule"/>
</dbReference>
<dbReference type="GO" id="GO:0000256">
    <property type="term" value="P:allantoin catabolic process"/>
    <property type="evidence" value="ECO:0007669"/>
    <property type="project" value="UniProtKB-UniRule"/>
</dbReference>
<dbReference type="GO" id="GO:0006145">
    <property type="term" value="P:purine nucleobase catabolic process"/>
    <property type="evidence" value="ECO:0007669"/>
    <property type="project" value="UniProtKB-UniRule"/>
</dbReference>
<dbReference type="CDD" id="cd20298">
    <property type="entry name" value="cupin_UAH"/>
    <property type="match status" value="1"/>
</dbReference>
<dbReference type="Gene3D" id="2.60.120.480">
    <property type="entry name" value="Ureidoglycolate hydrolase"/>
    <property type="match status" value="1"/>
</dbReference>
<dbReference type="HAMAP" id="MF_00616">
    <property type="entry name" value="Ureidogly_lyase"/>
    <property type="match status" value="1"/>
</dbReference>
<dbReference type="InterPro" id="IPR011051">
    <property type="entry name" value="RmlC_Cupin_sf"/>
</dbReference>
<dbReference type="InterPro" id="IPR047233">
    <property type="entry name" value="UAH_cupin"/>
</dbReference>
<dbReference type="InterPro" id="IPR007247">
    <property type="entry name" value="Ureidogly_lyase"/>
</dbReference>
<dbReference type="InterPro" id="IPR023525">
    <property type="entry name" value="Ureidogly_lyase_bac"/>
</dbReference>
<dbReference type="InterPro" id="IPR024060">
    <property type="entry name" value="Ureidoglycolate_lyase_dom_sf"/>
</dbReference>
<dbReference type="NCBIfam" id="NF002951">
    <property type="entry name" value="PRK03606.2-2"/>
    <property type="match status" value="1"/>
</dbReference>
<dbReference type="NCBIfam" id="NF009932">
    <property type="entry name" value="PRK13395.1"/>
    <property type="match status" value="1"/>
</dbReference>
<dbReference type="PANTHER" id="PTHR21221">
    <property type="entry name" value="UREIDOGLYCOLATE HYDROLASE"/>
    <property type="match status" value="1"/>
</dbReference>
<dbReference type="PANTHER" id="PTHR21221:SF1">
    <property type="entry name" value="UREIDOGLYCOLATE LYASE"/>
    <property type="match status" value="1"/>
</dbReference>
<dbReference type="Pfam" id="PF04115">
    <property type="entry name" value="Ureidogly_lyase"/>
    <property type="match status" value="1"/>
</dbReference>
<dbReference type="PIRSF" id="PIRSF017306">
    <property type="entry name" value="Ureidogly_hydro"/>
    <property type="match status" value="1"/>
</dbReference>
<dbReference type="SUPFAM" id="SSF51182">
    <property type="entry name" value="RmlC-like cupins"/>
    <property type="match status" value="1"/>
</dbReference>
<comment type="function">
    <text evidence="1">Catalyzes the catabolism of the allantoin degradation intermediate (S)-ureidoglycolate, generating urea and glyoxylate. Involved in the utilization of allantoin as nitrogen source.</text>
</comment>
<comment type="catalytic activity">
    <reaction evidence="1">
        <text>(S)-ureidoglycolate = urea + glyoxylate</text>
        <dbReference type="Rhea" id="RHEA:11304"/>
        <dbReference type="ChEBI" id="CHEBI:16199"/>
        <dbReference type="ChEBI" id="CHEBI:36655"/>
        <dbReference type="ChEBI" id="CHEBI:57296"/>
        <dbReference type="EC" id="4.3.2.3"/>
    </reaction>
</comment>
<comment type="cofactor">
    <cofactor evidence="1">
        <name>Ni(2+)</name>
        <dbReference type="ChEBI" id="CHEBI:49786"/>
    </cofactor>
</comment>
<comment type="pathway">
    <text evidence="1">Nitrogen metabolism; (S)-allantoin degradation.</text>
</comment>
<comment type="subunit">
    <text evidence="1">Homodimer.</text>
</comment>
<comment type="similarity">
    <text evidence="1">Belongs to the ureidoglycolate lyase family.</text>
</comment>
<protein>
    <recommendedName>
        <fullName evidence="1">Ureidoglycolate lyase</fullName>
        <ecNumber evidence="1">4.3.2.3</ecNumber>
    </recommendedName>
    <alternativeName>
        <fullName evidence="1">Ureidoglycolatase</fullName>
    </alternativeName>
</protein>
<evidence type="ECO:0000255" key="1">
    <source>
        <dbReference type="HAMAP-Rule" id="MF_00616"/>
    </source>
</evidence>
<name>ALLA_AGRFC</name>
<proteinExistence type="inferred from homology"/>
<accession>Q8UD04</accession>
<keyword id="KW-0456">Lyase</keyword>
<keyword id="KW-0659">Purine metabolism</keyword>
<keyword id="KW-1185">Reference proteome</keyword>
<organism>
    <name type="scientific">Agrobacterium fabrum (strain C58 / ATCC 33970)</name>
    <name type="common">Agrobacterium tumefaciens (strain C58)</name>
    <dbReference type="NCBI Taxonomy" id="176299"/>
    <lineage>
        <taxon>Bacteria</taxon>
        <taxon>Pseudomonadati</taxon>
        <taxon>Pseudomonadota</taxon>
        <taxon>Alphaproteobacteria</taxon>
        <taxon>Hyphomicrobiales</taxon>
        <taxon>Rhizobiaceae</taxon>
        <taxon>Rhizobium/Agrobacterium group</taxon>
        <taxon>Agrobacterium</taxon>
        <taxon>Agrobacterium tumefaciens complex</taxon>
    </lineage>
</organism>
<sequence length="166" mass="18643">MTDFLEIRPLTKEAFTPFGDVIETTPSSMRHINGGQTERHHALSAPEAAGEGARIILNIFRGQPRVFPHKIDMMERHPLGSQSFSPLSGRPFLVVVAQDDGGRPARPQVFLARGDQGVNYRRNVWHYPLMPLQAVSDFLVADREGPGNNLEEYFFDEPFMIAEPSL</sequence>
<feature type="chain" id="PRO_0000120543" description="Ureidoglycolate lyase">
    <location>
        <begin position="1"/>
        <end position="166"/>
    </location>
</feature>
<reference key="1">
    <citation type="journal article" date="2001" name="Science">
        <title>The genome of the natural genetic engineer Agrobacterium tumefaciens C58.</title>
        <authorList>
            <person name="Wood D.W."/>
            <person name="Setubal J.C."/>
            <person name="Kaul R."/>
            <person name="Monks D.E."/>
            <person name="Kitajima J.P."/>
            <person name="Okura V.K."/>
            <person name="Zhou Y."/>
            <person name="Chen L."/>
            <person name="Wood G.E."/>
            <person name="Almeida N.F. Jr."/>
            <person name="Woo L."/>
            <person name="Chen Y."/>
            <person name="Paulsen I.T."/>
            <person name="Eisen J.A."/>
            <person name="Karp P.D."/>
            <person name="Bovee D. Sr."/>
            <person name="Chapman P."/>
            <person name="Clendenning J."/>
            <person name="Deatherage G."/>
            <person name="Gillet W."/>
            <person name="Grant C."/>
            <person name="Kutyavin T."/>
            <person name="Levy R."/>
            <person name="Li M.-J."/>
            <person name="McClelland E."/>
            <person name="Palmieri A."/>
            <person name="Raymond C."/>
            <person name="Rouse G."/>
            <person name="Saenphimmachak C."/>
            <person name="Wu Z."/>
            <person name="Romero P."/>
            <person name="Gordon D."/>
            <person name="Zhang S."/>
            <person name="Yoo H."/>
            <person name="Tao Y."/>
            <person name="Biddle P."/>
            <person name="Jung M."/>
            <person name="Krespan W."/>
            <person name="Perry M."/>
            <person name="Gordon-Kamm B."/>
            <person name="Liao L."/>
            <person name="Kim S."/>
            <person name="Hendrick C."/>
            <person name="Zhao Z.-Y."/>
            <person name="Dolan M."/>
            <person name="Chumley F."/>
            <person name="Tingey S.V."/>
            <person name="Tomb J.-F."/>
            <person name="Gordon M.P."/>
            <person name="Olson M.V."/>
            <person name="Nester E.W."/>
        </authorList>
    </citation>
    <scope>NUCLEOTIDE SEQUENCE [LARGE SCALE GENOMIC DNA]</scope>
    <source>
        <strain>C58 / ATCC 33970</strain>
    </source>
</reference>
<reference key="2">
    <citation type="journal article" date="2001" name="Science">
        <title>Genome sequence of the plant pathogen and biotechnology agent Agrobacterium tumefaciens C58.</title>
        <authorList>
            <person name="Goodner B."/>
            <person name="Hinkle G."/>
            <person name="Gattung S."/>
            <person name="Miller N."/>
            <person name="Blanchard M."/>
            <person name="Qurollo B."/>
            <person name="Goldman B.S."/>
            <person name="Cao Y."/>
            <person name="Askenazi M."/>
            <person name="Halling C."/>
            <person name="Mullin L."/>
            <person name="Houmiel K."/>
            <person name="Gordon J."/>
            <person name="Vaudin M."/>
            <person name="Iartchouk O."/>
            <person name="Epp A."/>
            <person name="Liu F."/>
            <person name="Wollam C."/>
            <person name="Allinger M."/>
            <person name="Doughty D."/>
            <person name="Scott C."/>
            <person name="Lappas C."/>
            <person name="Markelz B."/>
            <person name="Flanagan C."/>
            <person name="Crowell C."/>
            <person name="Gurson J."/>
            <person name="Lomo C."/>
            <person name="Sear C."/>
            <person name="Strub G."/>
            <person name="Cielo C."/>
            <person name="Slater S."/>
        </authorList>
    </citation>
    <scope>NUCLEOTIDE SEQUENCE [LARGE SCALE GENOMIC DNA]</scope>
    <source>
        <strain>C58 / ATCC 33970</strain>
    </source>
</reference>